<reference key="1">
    <citation type="submission" date="2007-02" db="EMBL/GenBank/DDBJ databases">
        <title>Complete sequence of Mycobacterium sp. JLS.</title>
        <authorList>
            <consortium name="US DOE Joint Genome Institute"/>
            <person name="Copeland A."/>
            <person name="Lucas S."/>
            <person name="Lapidus A."/>
            <person name="Barry K."/>
            <person name="Detter J.C."/>
            <person name="Glavina del Rio T."/>
            <person name="Hammon N."/>
            <person name="Israni S."/>
            <person name="Dalin E."/>
            <person name="Tice H."/>
            <person name="Pitluck S."/>
            <person name="Chain P."/>
            <person name="Malfatti S."/>
            <person name="Shin M."/>
            <person name="Vergez L."/>
            <person name="Schmutz J."/>
            <person name="Larimer F."/>
            <person name="Land M."/>
            <person name="Hauser L."/>
            <person name="Kyrpides N."/>
            <person name="Mikhailova N."/>
            <person name="Miller C.D."/>
            <person name="Anderson A.J."/>
            <person name="Sims R.C."/>
            <person name="Richardson P."/>
        </authorList>
    </citation>
    <scope>NUCLEOTIDE SEQUENCE [LARGE SCALE GENOMIC DNA]</scope>
    <source>
        <strain>JLS</strain>
    </source>
</reference>
<dbReference type="EC" id="2.4.2.18" evidence="1"/>
<dbReference type="EMBL" id="CP000580">
    <property type="protein sequence ID" value="ABN99079.1"/>
    <property type="molecule type" value="Genomic_DNA"/>
</dbReference>
<dbReference type="SMR" id="A3Q1Q2"/>
<dbReference type="KEGG" id="mjl:Mjls_3301"/>
<dbReference type="HOGENOM" id="CLU_034315_4_1_11"/>
<dbReference type="UniPathway" id="UPA00035">
    <property type="reaction ID" value="UER00041"/>
</dbReference>
<dbReference type="GO" id="GO:0005829">
    <property type="term" value="C:cytosol"/>
    <property type="evidence" value="ECO:0007669"/>
    <property type="project" value="TreeGrafter"/>
</dbReference>
<dbReference type="GO" id="GO:0004048">
    <property type="term" value="F:anthranilate phosphoribosyltransferase activity"/>
    <property type="evidence" value="ECO:0007669"/>
    <property type="project" value="UniProtKB-UniRule"/>
</dbReference>
<dbReference type="GO" id="GO:0000287">
    <property type="term" value="F:magnesium ion binding"/>
    <property type="evidence" value="ECO:0007669"/>
    <property type="project" value="UniProtKB-UniRule"/>
</dbReference>
<dbReference type="GO" id="GO:0000162">
    <property type="term" value="P:L-tryptophan biosynthetic process"/>
    <property type="evidence" value="ECO:0007669"/>
    <property type="project" value="UniProtKB-UniRule"/>
</dbReference>
<dbReference type="FunFam" id="3.40.1030.10:FF:000002">
    <property type="entry name" value="Anthranilate phosphoribosyltransferase"/>
    <property type="match status" value="1"/>
</dbReference>
<dbReference type="Gene3D" id="3.40.1030.10">
    <property type="entry name" value="Nucleoside phosphorylase/phosphoribosyltransferase catalytic domain"/>
    <property type="match status" value="1"/>
</dbReference>
<dbReference type="Gene3D" id="1.20.970.10">
    <property type="entry name" value="Transferase, Pyrimidine Nucleoside Phosphorylase, Chain C"/>
    <property type="match status" value="1"/>
</dbReference>
<dbReference type="HAMAP" id="MF_00211">
    <property type="entry name" value="TrpD"/>
    <property type="match status" value="1"/>
</dbReference>
<dbReference type="InterPro" id="IPR005940">
    <property type="entry name" value="Anthranilate_Pribosyl_Tfrase"/>
</dbReference>
<dbReference type="InterPro" id="IPR000312">
    <property type="entry name" value="Glycosyl_Trfase_fam3"/>
</dbReference>
<dbReference type="InterPro" id="IPR017459">
    <property type="entry name" value="Glycosyl_Trfase_fam3_N_dom"/>
</dbReference>
<dbReference type="InterPro" id="IPR036320">
    <property type="entry name" value="Glycosyl_Trfase_fam3_N_dom_sf"/>
</dbReference>
<dbReference type="InterPro" id="IPR035902">
    <property type="entry name" value="Nuc_phospho_transferase"/>
</dbReference>
<dbReference type="NCBIfam" id="TIGR01245">
    <property type="entry name" value="trpD"/>
    <property type="match status" value="1"/>
</dbReference>
<dbReference type="PANTHER" id="PTHR43285">
    <property type="entry name" value="ANTHRANILATE PHOSPHORIBOSYLTRANSFERASE"/>
    <property type="match status" value="1"/>
</dbReference>
<dbReference type="PANTHER" id="PTHR43285:SF2">
    <property type="entry name" value="ANTHRANILATE PHOSPHORIBOSYLTRANSFERASE"/>
    <property type="match status" value="1"/>
</dbReference>
<dbReference type="Pfam" id="PF02885">
    <property type="entry name" value="Glycos_trans_3N"/>
    <property type="match status" value="1"/>
</dbReference>
<dbReference type="Pfam" id="PF00591">
    <property type="entry name" value="Glycos_transf_3"/>
    <property type="match status" value="1"/>
</dbReference>
<dbReference type="SUPFAM" id="SSF52418">
    <property type="entry name" value="Nucleoside phosphorylase/phosphoribosyltransferase catalytic domain"/>
    <property type="match status" value="1"/>
</dbReference>
<dbReference type="SUPFAM" id="SSF47648">
    <property type="entry name" value="Nucleoside phosphorylase/phosphoribosyltransferase N-terminal domain"/>
    <property type="match status" value="1"/>
</dbReference>
<evidence type="ECO:0000255" key="1">
    <source>
        <dbReference type="HAMAP-Rule" id="MF_00211"/>
    </source>
</evidence>
<sequence length="357" mass="37104">MAWEHLRVTDTPTWPSILGRLTTGQNLGTGQAAWAMDQIMTGTATPAQIAGFAVAMKLKRPTSAEVTELADVMLKHARRIPTDVIGNETVDIVGTGGDGANTVNLSTMAAIVVAAAGVPVMKHGNRAASSLSGGADTLEALGVRIDLGPEQVAASVAEVGIGFAFANQFHPSYKHASAVRRELGVPTVFNLLGPLTNPARPRAGLIGCAWAELAEVMAGVFASRNSSVLVVHGDDGLDELTTTTTSTIWRVQAGTVERLTFDPAAFGFQRAHLSELVGGDAEYNAAEVRAVLGGAKGAVRDAVVLNAAGALVAHAGLSSDAKWVPAWEAGLARATETIDSGAAEKLLARWVRFTQKL</sequence>
<keyword id="KW-0028">Amino-acid biosynthesis</keyword>
<keyword id="KW-0057">Aromatic amino acid biosynthesis</keyword>
<keyword id="KW-0328">Glycosyltransferase</keyword>
<keyword id="KW-0460">Magnesium</keyword>
<keyword id="KW-0479">Metal-binding</keyword>
<keyword id="KW-0808">Transferase</keyword>
<keyword id="KW-0822">Tryptophan biosynthesis</keyword>
<protein>
    <recommendedName>
        <fullName evidence="1">Anthranilate phosphoribosyltransferase</fullName>
        <ecNumber evidence="1">2.4.2.18</ecNumber>
    </recommendedName>
</protein>
<accession>A3Q1Q2</accession>
<feature type="chain" id="PRO_0000325438" description="Anthranilate phosphoribosyltransferase">
    <location>
        <begin position="1"/>
        <end position="357"/>
    </location>
</feature>
<feature type="binding site" evidence="1">
    <location>
        <position position="94"/>
    </location>
    <ligand>
        <name>5-phospho-alpha-D-ribose 1-diphosphate</name>
        <dbReference type="ChEBI" id="CHEBI:58017"/>
    </ligand>
</feature>
<feature type="binding site" evidence="1">
    <location>
        <position position="94"/>
    </location>
    <ligand>
        <name>anthranilate</name>
        <dbReference type="ChEBI" id="CHEBI:16567"/>
        <label>1</label>
    </ligand>
</feature>
<feature type="binding site" evidence="1">
    <location>
        <begin position="97"/>
        <end position="98"/>
    </location>
    <ligand>
        <name>5-phospho-alpha-D-ribose 1-diphosphate</name>
        <dbReference type="ChEBI" id="CHEBI:58017"/>
    </ligand>
</feature>
<feature type="binding site" evidence="1">
    <location>
        <position position="102"/>
    </location>
    <ligand>
        <name>5-phospho-alpha-D-ribose 1-diphosphate</name>
        <dbReference type="ChEBI" id="CHEBI:58017"/>
    </ligand>
</feature>
<feature type="binding site" evidence="1">
    <location>
        <begin position="104"/>
        <end position="107"/>
    </location>
    <ligand>
        <name>5-phospho-alpha-D-ribose 1-diphosphate</name>
        <dbReference type="ChEBI" id="CHEBI:58017"/>
    </ligand>
</feature>
<feature type="binding site" evidence="1">
    <location>
        <position position="106"/>
    </location>
    <ligand>
        <name>Mg(2+)</name>
        <dbReference type="ChEBI" id="CHEBI:18420"/>
        <label>1</label>
    </ligand>
</feature>
<feature type="binding site" evidence="1">
    <location>
        <begin position="122"/>
        <end position="130"/>
    </location>
    <ligand>
        <name>5-phospho-alpha-D-ribose 1-diphosphate</name>
        <dbReference type="ChEBI" id="CHEBI:58017"/>
    </ligand>
</feature>
<feature type="binding site" evidence="1">
    <location>
        <position position="125"/>
    </location>
    <ligand>
        <name>anthranilate</name>
        <dbReference type="ChEBI" id="CHEBI:16567"/>
        <label>1</label>
    </ligand>
</feature>
<feature type="binding site" evidence="1">
    <location>
        <position position="134"/>
    </location>
    <ligand>
        <name>5-phospho-alpha-D-ribose 1-diphosphate</name>
        <dbReference type="ChEBI" id="CHEBI:58017"/>
    </ligand>
</feature>
<feature type="binding site" evidence="1">
    <location>
        <position position="180"/>
    </location>
    <ligand>
        <name>anthranilate</name>
        <dbReference type="ChEBI" id="CHEBI:16567"/>
        <label>2</label>
    </ligand>
</feature>
<feature type="binding site" evidence="1">
    <location>
        <position position="238"/>
    </location>
    <ligand>
        <name>Mg(2+)</name>
        <dbReference type="ChEBI" id="CHEBI:18420"/>
        <label>2</label>
    </ligand>
</feature>
<feature type="binding site" evidence="1">
    <location>
        <position position="239"/>
    </location>
    <ligand>
        <name>Mg(2+)</name>
        <dbReference type="ChEBI" id="CHEBI:18420"/>
        <label>1</label>
    </ligand>
</feature>
<feature type="binding site" evidence="1">
    <location>
        <position position="239"/>
    </location>
    <ligand>
        <name>Mg(2+)</name>
        <dbReference type="ChEBI" id="CHEBI:18420"/>
        <label>2</label>
    </ligand>
</feature>
<comment type="function">
    <text evidence="1">Catalyzes the transfer of the phosphoribosyl group of 5-phosphorylribose-1-pyrophosphate (PRPP) to anthranilate to yield N-(5'-phosphoribosyl)-anthranilate (PRA).</text>
</comment>
<comment type="catalytic activity">
    <reaction evidence="1">
        <text>N-(5-phospho-beta-D-ribosyl)anthranilate + diphosphate = 5-phospho-alpha-D-ribose 1-diphosphate + anthranilate</text>
        <dbReference type="Rhea" id="RHEA:11768"/>
        <dbReference type="ChEBI" id="CHEBI:16567"/>
        <dbReference type="ChEBI" id="CHEBI:18277"/>
        <dbReference type="ChEBI" id="CHEBI:33019"/>
        <dbReference type="ChEBI" id="CHEBI:58017"/>
        <dbReference type="EC" id="2.4.2.18"/>
    </reaction>
</comment>
<comment type="cofactor">
    <cofactor evidence="1">
        <name>Mg(2+)</name>
        <dbReference type="ChEBI" id="CHEBI:18420"/>
    </cofactor>
    <text evidence="1">Binds 2 magnesium ions per monomer.</text>
</comment>
<comment type="pathway">
    <text evidence="1">Amino-acid biosynthesis; L-tryptophan biosynthesis; L-tryptophan from chorismate: step 2/5.</text>
</comment>
<comment type="subunit">
    <text evidence="1">Homodimer.</text>
</comment>
<comment type="similarity">
    <text evidence="1">Belongs to the anthranilate phosphoribosyltransferase family.</text>
</comment>
<name>TRPD_MYCSJ</name>
<proteinExistence type="inferred from homology"/>
<organism>
    <name type="scientific">Mycobacterium sp. (strain JLS)</name>
    <dbReference type="NCBI Taxonomy" id="164757"/>
    <lineage>
        <taxon>Bacteria</taxon>
        <taxon>Bacillati</taxon>
        <taxon>Actinomycetota</taxon>
        <taxon>Actinomycetes</taxon>
        <taxon>Mycobacteriales</taxon>
        <taxon>Mycobacteriaceae</taxon>
        <taxon>Mycobacterium</taxon>
    </lineage>
</organism>
<gene>
    <name evidence="1" type="primary">trpD</name>
    <name type="ordered locus">Mjls_3301</name>
</gene>